<feature type="chain" id="PRO_0000051402" description="WD repeat-containing protein 48">
    <location>
        <begin position="1"/>
        <end position="677"/>
    </location>
</feature>
<feature type="repeat" description="WD 1" evidence="3">
    <location>
        <begin position="28"/>
        <end position="67"/>
    </location>
</feature>
<feature type="repeat" description="WD 2" evidence="3">
    <location>
        <begin position="73"/>
        <end position="112"/>
    </location>
</feature>
<feature type="repeat" description="WD 3" evidence="3">
    <location>
        <begin position="115"/>
        <end position="154"/>
    </location>
</feature>
<feature type="repeat" description="WD 4" evidence="3">
    <location>
        <begin position="166"/>
        <end position="205"/>
    </location>
</feature>
<feature type="repeat" description="WD 5" evidence="3">
    <location>
        <begin position="208"/>
        <end position="247"/>
    </location>
</feature>
<feature type="repeat" description="WD 6" evidence="3">
    <location>
        <begin position="250"/>
        <end position="289"/>
    </location>
</feature>
<feature type="repeat" description="WD 7" evidence="2">
    <location>
        <begin position="292"/>
        <end position="334"/>
    </location>
</feature>
<feature type="repeat" description="WD 8" evidence="3">
    <location>
        <begin position="358"/>
        <end position="452"/>
    </location>
</feature>
<feature type="region of interest" description="Disordered" evidence="4">
    <location>
        <begin position="607"/>
        <end position="628"/>
    </location>
</feature>
<feature type="compositionally biased region" description="Low complexity" evidence="4">
    <location>
        <begin position="609"/>
        <end position="620"/>
    </location>
</feature>
<feature type="modified residue" description="Phosphotyrosine" evidence="1">
    <location>
        <position position="28"/>
    </location>
</feature>
<feature type="modified residue" description="N6-acetyllysine" evidence="2">
    <location>
        <position position="214"/>
    </location>
</feature>
<feature type="modified residue" description="N6-acetyllysine" evidence="1">
    <location>
        <position position="578"/>
    </location>
</feature>
<feature type="modified residue" description="Phosphothreonine" evidence="2">
    <location>
        <position position="613"/>
    </location>
</feature>
<organism evidence="6">
    <name type="scientific">Pongo abelii</name>
    <name type="common">Sumatran orangutan</name>
    <name type="synonym">Pongo pygmaeus abelii</name>
    <dbReference type="NCBI Taxonomy" id="9601"/>
    <lineage>
        <taxon>Eukaryota</taxon>
        <taxon>Metazoa</taxon>
        <taxon>Chordata</taxon>
        <taxon>Craniata</taxon>
        <taxon>Vertebrata</taxon>
        <taxon>Euteleostomi</taxon>
        <taxon>Mammalia</taxon>
        <taxon>Eutheria</taxon>
        <taxon>Euarchontoglires</taxon>
        <taxon>Primates</taxon>
        <taxon>Haplorrhini</taxon>
        <taxon>Catarrhini</taxon>
        <taxon>Hominidae</taxon>
        <taxon>Pongo</taxon>
    </lineage>
</organism>
<dbReference type="EMBL" id="CR858893">
    <property type="protein sequence ID" value="CAH91092.1"/>
    <property type="molecule type" value="mRNA"/>
</dbReference>
<dbReference type="RefSeq" id="NP_001125636.1">
    <property type="nucleotide sequence ID" value="NM_001132164.2"/>
</dbReference>
<dbReference type="SMR" id="Q5RAW8"/>
<dbReference type="FunCoup" id="Q5RAW8">
    <property type="interactions" value="5800"/>
</dbReference>
<dbReference type="STRING" id="9601.ENSPPYP00000015661"/>
<dbReference type="Ensembl" id="ENSPPYT00000016282.2">
    <property type="protein sequence ID" value="ENSPPYP00000015661.1"/>
    <property type="gene ID" value="ENSPPYG00000014001.2"/>
</dbReference>
<dbReference type="GeneID" id="100172554"/>
<dbReference type="KEGG" id="pon:100172554"/>
<dbReference type="CTD" id="57599"/>
<dbReference type="eggNOG" id="KOG0308">
    <property type="taxonomic scope" value="Eukaryota"/>
</dbReference>
<dbReference type="GeneTree" id="ENSGT00920000149157"/>
<dbReference type="HOGENOM" id="CLU_014960_0_1_1"/>
<dbReference type="InParanoid" id="Q5RAW8"/>
<dbReference type="OrthoDB" id="2421129at2759"/>
<dbReference type="TreeFam" id="TF315205"/>
<dbReference type="Proteomes" id="UP000001595">
    <property type="component" value="Chromosome 3"/>
</dbReference>
<dbReference type="GO" id="GO:0005770">
    <property type="term" value="C:late endosome"/>
    <property type="evidence" value="ECO:0007669"/>
    <property type="project" value="UniProtKB-SubCell"/>
</dbReference>
<dbReference type="GO" id="GO:0005764">
    <property type="term" value="C:lysosome"/>
    <property type="evidence" value="ECO:0007669"/>
    <property type="project" value="UniProtKB-SubCell"/>
</dbReference>
<dbReference type="GO" id="GO:0005634">
    <property type="term" value="C:nucleus"/>
    <property type="evidence" value="ECO:0000250"/>
    <property type="project" value="UniProtKB"/>
</dbReference>
<dbReference type="GO" id="GO:0035800">
    <property type="term" value="F:deubiquitinase activator activity"/>
    <property type="evidence" value="ECO:0000250"/>
    <property type="project" value="UniProtKB"/>
</dbReference>
<dbReference type="GO" id="GO:0003677">
    <property type="term" value="F:DNA binding"/>
    <property type="evidence" value="ECO:0000250"/>
    <property type="project" value="UniProtKB"/>
</dbReference>
<dbReference type="GO" id="GO:0003690">
    <property type="term" value="F:double-stranded DNA binding"/>
    <property type="evidence" value="ECO:0000250"/>
    <property type="project" value="UniProtKB"/>
</dbReference>
<dbReference type="GO" id="GO:0003697">
    <property type="term" value="F:single-stranded DNA binding"/>
    <property type="evidence" value="ECO:0000250"/>
    <property type="project" value="UniProtKB"/>
</dbReference>
<dbReference type="GO" id="GO:0043130">
    <property type="term" value="F:ubiquitin binding"/>
    <property type="evidence" value="ECO:0007669"/>
    <property type="project" value="TreeGrafter"/>
</dbReference>
<dbReference type="GO" id="GO:0006974">
    <property type="term" value="P:DNA damage response"/>
    <property type="evidence" value="ECO:0000250"/>
    <property type="project" value="UniProtKB"/>
</dbReference>
<dbReference type="GO" id="GO:0000724">
    <property type="term" value="P:double-strand break repair via homologous recombination"/>
    <property type="evidence" value="ECO:0007669"/>
    <property type="project" value="TreeGrafter"/>
</dbReference>
<dbReference type="GO" id="GO:1905168">
    <property type="term" value="P:positive regulation of double-strand break repair via homologous recombination"/>
    <property type="evidence" value="ECO:0000250"/>
    <property type="project" value="UniProtKB"/>
</dbReference>
<dbReference type="CDD" id="cd17041">
    <property type="entry name" value="Ubl_WDR48"/>
    <property type="match status" value="1"/>
</dbReference>
<dbReference type="CDD" id="cd00200">
    <property type="entry name" value="WD40"/>
    <property type="match status" value="1"/>
</dbReference>
<dbReference type="FunFam" id="2.130.10.10:FF:000054">
    <property type="entry name" value="Putative WD repeat-containing protein 48"/>
    <property type="match status" value="1"/>
</dbReference>
<dbReference type="FunFam" id="2.130.10.10:FF:002031">
    <property type="entry name" value="WD repeat domain 48b"/>
    <property type="match status" value="1"/>
</dbReference>
<dbReference type="Gene3D" id="2.130.10.10">
    <property type="entry name" value="YVTN repeat-like/Quinoprotein amine dehydrogenase"/>
    <property type="match status" value="2"/>
</dbReference>
<dbReference type="InterPro" id="IPR020472">
    <property type="entry name" value="G-protein_beta_WD-40_rep"/>
</dbReference>
<dbReference type="InterPro" id="IPR015943">
    <property type="entry name" value="WD40/YVTN_repeat-like_dom_sf"/>
</dbReference>
<dbReference type="InterPro" id="IPR019775">
    <property type="entry name" value="WD40_repeat_CS"/>
</dbReference>
<dbReference type="InterPro" id="IPR036322">
    <property type="entry name" value="WD40_repeat_dom_sf"/>
</dbReference>
<dbReference type="InterPro" id="IPR001680">
    <property type="entry name" value="WD40_rpt"/>
</dbReference>
<dbReference type="InterPro" id="IPR051246">
    <property type="entry name" value="WDR48"/>
</dbReference>
<dbReference type="InterPro" id="IPR021772">
    <property type="entry name" value="WDR48/Bun107"/>
</dbReference>
<dbReference type="PANTHER" id="PTHR19862">
    <property type="entry name" value="WD REPEAT-CONTAINING PROTEIN 48"/>
    <property type="match status" value="1"/>
</dbReference>
<dbReference type="PANTHER" id="PTHR19862:SF14">
    <property type="entry name" value="WD REPEAT-CONTAINING PROTEIN 48"/>
    <property type="match status" value="1"/>
</dbReference>
<dbReference type="Pfam" id="PF11816">
    <property type="entry name" value="DUF3337"/>
    <property type="match status" value="1"/>
</dbReference>
<dbReference type="Pfam" id="PF00400">
    <property type="entry name" value="WD40"/>
    <property type="match status" value="6"/>
</dbReference>
<dbReference type="PRINTS" id="PR00320">
    <property type="entry name" value="GPROTEINBRPT"/>
</dbReference>
<dbReference type="SMART" id="SM00320">
    <property type="entry name" value="WD40"/>
    <property type="match status" value="7"/>
</dbReference>
<dbReference type="SUPFAM" id="SSF50978">
    <property type="entry name" value="WD40 repeat-like"/>
    <property type="match status" value="1"/>
</dbReference>
<dbReference type="PROSITE" id="PS00678">
    <property type="entry name" value="WD_REPEATS_1"/>
    <property type="match status" value="2"/>
</dbReference>
<dbReference type="PROSITE" id="PS50082">
    <property type="entry name" value="WD_REPEATS_2"/>
    <property type="match status" value="5"/>
</dbReference>
<dbReference type="PROSITE" id="PS50294">
    <property type="entry name" value="WD_REPEATS_REGION"/>
    <property type="match status" value="4"/>
</dbReference>
<comment type="function">
    <text evidence="2">Regulator of deubiquitinating complexes, which acts as a strong activator of USP1, USP12 and USP46. Enhances the USP1-mediated deubiquitination of FANCD2; USP1 being almost inactive by itself. Activates deubiquitination by increasing the catalytic turnover without increasing the affinity of deubiquitinating enzymes for the substrate. Also activates deubiquitinating activity of complexes containing USP12. Docks at the distal end of the USP12 fingers domain and induces a cascade of structural changes leading to the activation of the enzyme. Together with RAD51AP1, promotes DNA repair by stimulating RAD51-mediated homologous recombination. Binds single-stranded DNA (ssDNA) and double-stranded DNA (dsDNA). DNA-binding is required both for USP1-mediated deubiquitination of FANCD2 and stimulation of RAD51-mediated homologous recombination: both WDR48/UAF1 and RAD51AP1 have coordinated role in DNA-binding during these processes. Together with ATAD5 and by regulating USP1 activity, has a role in PCNA-mediated translesion synthesis (TLS) by deubiquitinating monoubiquitinated PCNA. Together with ATAD5, has a role in recruiting RAD51 to stalled forks during replication stress.</text>
</comment>
<comment type="subunit">
    <text evidence="2">Interacts with USP46. Interacts with USP1. Interacts with USP12. Component of the USP12-WDR20-WDR48 deubiquitinating complex. Component of the USP12-DMWD-WDR48 deubiquitinating complex. Interacts with PHLPP1. Interacts with RAD51AP1; the interaction is direct and promotes formation of a trimeric complex with RAD51 via RAD51AP1. Interacts with ATAD5; the interaction regulates USP1-mediated PCNA deubiquitination. Interacts with RAD51; the interaction is enhanced under replication stress. Interacts with ITCH; the interaction is more efficient when both USP12 and WDR48/UAF1 are involved and may facilitate recruitment of the USP12 deubiquitinating complex to Notch.</text>
</comment>
<comment type="subcellular location">
    <subcellularLocation>
        <location evidence="2">Nucleus</location>
    </subcellularLocation>
    <subcellularLocation>
        <location evidence="2">Cytoplasm</location>
    </subcellularLocation>
    <subcellularLocation>
        <location evidence="2">Lysosome</location>
    </subcellularLocation>
    <subcellularLocation>
        <location evidence="2">Late endosome</location>
    </subcellularLocation>
    <text evidence="2">Mainly in cytoplasmic compartments.</text>
</comment>
<comment type="domain">
    <text evidence="2">The WD repeats are required for the interaction with deubiquitinating enzymes USP1, USP12 and USP46.</text>
</comment>
<comment type="similarity">
    <text evidence="5">Belongs to the WD repeat WDR48 family.</text>
</comment>
<accession>Q5RAW8</accession>
<reference key="1">
    <citation type="submission" date="2004-11" db="EMBL/GenBank/DDBJ databases">
        <authorList>
            <consortium name="The German cDNA consortium"/>
        </authorList>
    </citation>
    <scope>NUCLEOTIDE SEQUENCE [LARGE SCALE MRNA]</scope>
    <source>
        <tissue>Brain cortex</tissue>
    </source>
</reference>
<sequence length="677" mass="76223">MAAHHRQNTAGRRKVQVSYVIRDEVEKYNRNGVNALQLDPALNRLFTAGRDSIIRIWSVNQHKQDPYIASMEHHTDWVNDIVLCCNGKTLISASSDTTVKVWNAHKGFCMSTLRTHKDYVKALAYAKDKELVASAGLDRQIFLWDVNTLTALTASNNTVTTSSLSGNKDSIYSLAMNQLGTIIVSGSTEKVLRVWDPRTCAKLMKLKGHTDNVKALLLNRDGTQCLSGSSDGTIRLWSLGQQRCIATYRVHDEGVWALQVNDAFTHVYSGGRDRKIYCTDLRNPDIRVLICEEKAPVLKMELDRSADPPPAIWVATTKSTVNKWILKGIHNFRASGDYDNDCTNPITPLCTQPDQVIKGGASIIQCHILNDKRHILTKDTNNNVAYWDVLKACKVEDLGKVDFEDEIKKRFKMVYVPNWFSVDLKTGMLTITLDESDCFAAWVSAKDAGFSSPDGSDPKLNLGGLLLQALLEYWPRTHVNPMDEEENEVNHVNGEQENRVQKGNGYFQVPPHTPVIFGEAGGRTLFRLLCRDSGGETESMLLNETVPQWVIDITVDKNMPKFNKIPFYLQPHASSGAKTLKKDRLSASDMLQVRKVMEHVYEKIINLDNESQTTSSSNNEKPGEQEKEEDIAVLAEEKIELLCQDQVLDPNMDLRTVKHFIWKSGGDLTLHYRQKST</sequence>
<proteinExistence type="evidence at transcript level"/>
<keyword id="KW-0007">Acetylation</keyword>
<keyword id="KW-0963">Cytoplasm</keyword>
<keyword id="KW-0227">DNA damage</keyword>
<keyword id="KW-0234">DNA repair</keyword>
<keyword id="KW-0238">DNA-binding</keyword>
<keyword id="KW-0967">Endosome</keyword>
<keyword id="KW-0458">Lysosome</keyword>
<keyword id="KW-0539">Nucleus</keyword>
<keyword id="KW-0597">Phosphoprotein</keyword>
<keyword id="KW-1185">Reference proteome</keyword>
<keyword id="KW-0677">Repeat</keyword>
<keyword id="KW-0833">Ubl conjugation pathway</keyword>
<keyword id="KW-0853">WD repeat</keyword>
<gene>
    <name type="primary">WDR48</name>
    <name type="synonym">UAF1</name>
</gene>
<protein>
    <recommendedName>
        <fullName>WD repeat-containing protein 48</fullName>
    </recommendedName>
    <alternativeName>
        <fullName>USP1-associated factor 1</fullName>
    </alternativeName>
</protein>
<name>WDR48_PONAB</name>
<evidence type="ECO:0000250" key="1">
    <source>
        <dbReference type="UniProtKB" id="Q8BH57"/>
    </source>
</evidence>
<evidence type="ECO:0000250" key="2">
    <source>
        <dbReference type="UniProtKB" id="Q8TAF3"/>
    </source>
</evidence>
<evidence type="ECO:0000255" key="3"/>
<evidence type="ECO:0000256" key="4">
    <source>
        <dbReference type="SAM" id="MobiDB-lite"/>
    </source>
</evidence>
<evidence type="ECO:0000305" key="5"/>
<evidence type="ECO:0000312" key="6">
    <source>
        <dbReference type="Proteomes" id="UP000001595"/>
    </source>
</evidence>